<dbReference type="EC" id="1.3.5.2" evidence="1"/>
<dbReference type="EMBL" id="CP000143">
    <property type="protein sequence ID" value="ABA80140.1"/>
    <property type="molecule type" value="Genomic_DNA"/>
</dbReference>
<dbReference type="RefSeq" id="WP_011338626.1">
    <property type="nucleotide sequence ID" value="NC_007493.2"/>
</dbReference>
<dbReference type="RefSeq" id="YP_354041.1">
    <property type="nucleotide sequence ID" value="NC_007493.2"/>
</dbReference>
<dbReference type="SMR" id="Q3IZ94"/>
<dbReference type="STRING" id="272943.RSP_0957"/>
<dbReference type="EnsemblBacteria" id="ABA80140">
    <property type="protein sequence ID" value="ABA80140"/>
    <property type="gene ID" value="RSP_0957"/>
</dbReference>
<dbReference type="GeneID" id="3720748"/>
<dbReference type="KEGG" id="rsp:RSP_0957"/>
<dbReference type="PATRIC" id="fig|272943.9.peg.2928"/>
<dbReference type="eggNOG" id="COG0167">
    <property type="taxonomic scope" value="Bacteria"/>
</dbReference>
<dbReference type="OrthoDB" id="9802377at2"/>
<dbReference type="PhylomeDB" id="Q3IZ94"/>
<dbReference type="UniPathway" id="UPA00070">
    <property type="reaction ID" value="UER00946"/>
</dbReference>
<dbReference type="Proteomes" id="UP000002703">
    <property type="component" value="Chromosome 1"/>
</dbReference>
<dbReference type="GO" id="GO:0005737">
    <property type="term" value="C:cytoplasm"/>
    <property type="evidence" value="ECO:0007669"/>
    <property type="project" value="InterPro"/>
</dbReference>
<dbReference type="GO" id="GO:0005886">
    <property type="term" value="C:plasma membrane"/>
    <property type="evidence" value="ECO:0007669"/>
    <property type="project" value="UniProtKB-SubCell"/>
</dbReference>
<dbReference type="GO" id="GO:0106430">
    <property type="term" value="F:dihydroorotate dehydrogenase (quinone) activity"/>
    <property type="evidence" value="ECO:0007669"/>
    <property type="project" value="UniProtKB-EC"/>
</dbReference>
<dbReference type="GO" id="GO:0006207">
    <property type="term" value="P:'de novo' pyrimidine nucleobase biosynthetic process"/>
    <property type="evidence" value="ECO:0007669"/>
    <property type="project" value="InterPro"/>
</dbReference>
<dbReference type="GO" id="GO:0044205">
    <property type="term" value="P:'de novo' UMP biosynthetic process"/>
    <property type="evidence" value="ECO:0007669"/>
    <property type="project" value="UniProtKB-UniRule"/>
</dbReference>
<dbReference type="CDD" id="cd04738">
    <property type="entry name" value="DHOD_2_like"/>
    <property type="match status" value="1"/>
</dbReference>
<dbReference type="Gene3D" id="3.20.20.70">
    <property type="entry name" value="Aldolase class I"/>
    <property type="match status" value="1"/>
</dbReference>
<dbReference type="HAMAP" id="MF_00225">
    <property type="entry name" value="DHO_dh_type2"/>
    <property type="match status" value="1"/>
</dbReference>
<dbReference type="InterPro" id="IPR013785">
    <property type="entry name" value="Aldolase_TIM"/>
</dbReference>
<dbReference type="InterPro" id="IPR050074">
    <property type="entry name" value="DHO_dehydrogenase"/>
</dbReference>
<dbReference type="InterPro" id="IPR012135">
    <property type="entry name" value="Dihydroorotate_DH_1_2"/>
</dbReference>
<dbReference type="InterPro" id="IPR005719">
    <property type="entry name" value="Dihydroorotate_DH_2"/>
</dbReference>
<dbReference type="InterPro" id="IPR005720">
    <property type="entry name" value="Dihydroorotate_DH_cat"/>
</dbReference>
<dbReference type="InterPro" id="IPR001295">
    <property type="entry name" value="Dihydroorotate_DH_CS"/>
</dbReference>
<dbReference type="NCBIfam" id="NF003645">
    <property type="entry name" value="PRK05286.1-2"/>
    <property type="match status" value="1"/>
</dbReference>
<dbReference type="NCBIfam" id="NF003652">
    <property type="entry name" value="PRK05286.2-5"/>
    <property type="match status" value="1"/>
</dbReference>
<dbReference type="NCBIfam" id="TIGR01036">
    <property type="entry name" value="pyrD_sub2"/>
    <property type="match status" value="1"/>
</dbReference>
<dbReference type="PANTHER" id="PTHR48109:SF4">
    <property type="entry name" value="DIHYDROOROTATE DEHYDROGENASE (QUINONE), MITOCHONDRIAL"/>
    <property type="match status" value="1"/>
</dbReference>
<dbReference type="PANTHER" id="PTHR48109">
    <property type="entry name" value="DIHYDROOROTATE DEHYDROGENASE (QUINONE), MITOCHONDRIAL-RELATED"/>
    <property type="match status" value="1"/>
</dbReference>
<dbReference type="Pfam" id="PF01180">
    <property type="entry name" value="DHO_dh"/>
    <property type="match status" value="1"/>
</dbReference>
<dbReference type="PIRSF" id="PIRSF000164">
    <property type="entry name" value="DHO_oxidase"/>
    <property type="match status" value="1"/>
</dbReference>
<dbReference type="SUPFAM" id="SSF51395">
    <property type="entry name" value="FMN-linked oxidoreductases"/>
    <property type="match status" value="1"/>
</dbReference>
<dbReference type="PROSITE" id="PS00911">
    <property type="entry name" value="DHODEHASE_1"/>
    <property type="match status" value="1"/>
</dbReference>
<dbReference type="PROSITE" id="PS00912">
    <property type="entry name" value="DHODEHASE_2"/>
    <property type="match status" value="1"/>
</dbReference>
<proteinExistence type="inferred from homology"/>
<keyword id="KW-1003">Cell membrane</keyword>
<keyword id="KW-0285">Flavoprotein</keyword>
<keyword id="KW-0288">FMN</keyword>
<keyword id="KW-0472">Membrane</keyword>
<keyword id="KW-0560">Oxidoreductase</keyword>
<keyword id="KW-0665">Pyrimidine biosynthesis</keyword>
<keyword id="KW-1185">Reference proteome</keyword>
<accession>Q3IZ94</accession>
<reference key="1">
    <citation type="submission" date="2005-09" db="EMBL/GenBank/DDBJ databases">
        <title>Complete sequence of chromosome 1 of Rhodobacter sphaeroides 2.4.1.</title>
        <authorList>
            <person name="Copeland A."/>
            <person name="Lucas S."/>
            <person name="Lapidus A."/>
            <person name="Barry K."/>
            <person name="Detter J.C."/>
            <person name="Glavina T."/>
            <person name="Hammon N."/>
            <person name="Israni S."/>
            <person name="Pitluck S."/>
            <person name="Richardson P."/>
            <person name="Mackenzie C."/>
            <person name="Choudhary M."/>
            <person name="Larimer F."/>
            <person name="Hauser L.J."/>
            <person name="Land M."/>
            <person name="Donohue T.J."/>
            <person name="Kaplan S."/>
        </authorList>
    </citation>
    <scope>NUCLEOTIDE SEQUENCE [LARGE SCALE GENOMIC DNA]</scope>
    <source>
        <strain>ATCC 17023 / DSM 158 / JCM 6121 / CCUG 31486 / LMG 2827 / NBRC 12203 / NCIMB 8253 / ATH 2.4.1.</strain>
    </source>
</reference>
<protein>
    <recommendedName>
        <fullName evidence="1">Dihydroorotate dehydrogenase (quinone)</fullName>
        <ecNumber evidence="1">1.3.5.2</ecNumber>
    </recommendedName>
    <alternativeName>
        <fullName evidence="1">DHOdehase</fullName>
        <shortName evidence="1">DHOD</shortName>
        <shortName evidence="1">DHODase</shortName>
    </alternativeName>
    <alternativeName>
        <fullName evidence="1">Dihydroorotate oxidase</fullName>
    </alternativeName>
</protein>
<feature type="chain" id="PRO_0000336485" description="Dihydroorotate dehydrogenase (quinone)">
    <location>
        <begin position="1"/>
        <end position="354"/>
    </location>
</feature>
<feature type="active site" description="Nucleophile" evidence="1">
    <location>
        <position position="173"/>
    </location>
</feature>
<feature type="binding site" evidence="1">
    <location>
        <begin position="61"/>
        <end position="65"/>
    </location>
    <ligand>
        <name>FMN</name>
        <dbReference type="ChEBI" id="CHEBI:58210"/>
    </ligand>
</feature>
<feature type="binding site" evidence="1">
    <location>
        <position position="65"/>
    </location>
    <ligand>
        <name>substrate</name>
    </ligand>
</feature>
<feature type="binding site" evidence="1">
    <location>
        <position position="85"/>
    </location>
    <ligand>
        <name>FMN</name>
        <dbReference type="ChEBI" id="CHEBI:58210"/>
    </ligand>
</feature>
<feature type="binding site" evidence="1">
    <location>
        <begin position="110"/>
        <end position="114"/>
    </location>
    <ligand>
        <name>substrate</name>
    </ligand>
</feature>
<feature type="binding site" evidence="1">
    <location>
        <position position="139"/>
    </location>
    <ligand>
        <name>FMN</name>
        <dbReference type="ChEBI" id="CHEBI:58210"/>
    </ligand>
</feature>
<feature type="binding site" evidence="1">
    <location>
        <position position="170"/>
    </location>
    <ligand>
        <name>FMN</name>
        <dbReference type="ChEBI" id="CHEBI:58210"/>
    </ligand>
</feature>
<feature type="binding site" evidence="1">
    <location>
        <position position="170"/>
    </location>
    <ligand>
        <name>substrate</name>
    </ligand>
</feature>
<feature type="binding site" evidence="1">
    <location>
        <position position="175"/>
    </location>
    <ligand>
        <name>substrate</name>
    </ligand>
</feature>
<feature type="binding site" evidence="1">
    <location>
        <position position="211"/>
    </location>
    <ligand>
        <name>FMN</name>
        <dbReference type="ChEBI" id="CHEBI:58210"/>
    </ligand>
</feature>
<feature type="binding site" evidence="1">
    <location>
        <position position="239"/>
    </location>
    <ligand>
        <name>FMN</name>
        <dbReference type="ChEBI" id="CHEBI:58210"/>
    </ligand>
</feature>
<feature type="binding site" evidence="1">
    <location>
        <begin position="240"/>
        <end position="241"/>
    </location>
    <ligand>
        <name>substrate</name>
    </ligand>
</feature>
<feature type="binding site" evidence="1">
    <location>
        <position position="261"/>
    </location>
    <ligand>
        <name>FMN</name>
        <dbReference type="ChEBI" id="CHEBI:58210"/>
    </ligand>
</feature>
<feature type="binding site" evidence="1">
    <location>
        <position position="290"/>
    </location>
    <ligand>
        <name>FMN</name>
        <dbReference type="ChEBI" id="CHEBI:58210"/>
    </ligand>
</feature>
<feature type="binding site" evidence="1">
    <location>
        <begin position="311"/>
        <end position="312"/>
    </location>
    <ligand>
        <name>FMN</name>
        <dbReference type="ChEBI" id="CHEBI:58210"/>
    </ligand>
</feature>
<gene>
    <name evidence="1" type="primary">pyrD</name>
    <name type="ordered locus">RHOS4_25720</name>
    <name type="ORF">RSP_0957</name>
</gene>
<name>PYRD_CERS4</name>
<sequence length="354" mass="36570">MNILERAALTALHRMDPEKAHSLSLSALRSGLVPLPGPVTSPRLATVVGGLVLPNPVGLAAGYDKNAVALAALMRAGFGFLEVGAATPRPQPGNPQPRLFRLTEDRAAINRFGFNNDGAATICARLAMRPRGAVPVGLNLGANKDSPDRAADFAAVLAACGPHADFATVNVSSPNTERLRDLQGRQALTALLEGVMQVQAGFARPVPVFLKIAPDLSDADLAEIAEVALASGIAGIVATNTTLARDGLRSAHARETGGLSGAPLFERSTRVLARLSELTEGRLPLIGVGGVASAEEAYAKIRAGASAVQLYTAMVYQGIGLAARIARGLDALLLRDGFGSVAEAVGTGRADWLT</sequence>
<evidence type="ECO:0000255" key="1">
    <source>
        <dbReference type="HAMAP-Rule" id="MF_00225"/>
    </source>
</evidence>
<comment type="function">
    <text evidence="1">Catalyzes the conversion of dihydroorotate to orotate with quinone as electron acceptor.</text>
</comment>
<comment type="catalytic activity">
    <reaction evidence="1">
        <text>(S)-dihydroorotate + a quinone = orotate + a quinol</text>
        <dbReference type="Rhea" id="RHEA:30187"/>
        <dbReference type="ChEBI" id="CHEBI:24646"/>
        <dbReference type="ChEBI" id="CHEBI:30839"/>
        <dbReference type="ChEBI" id="CHEBI:30864"/>
        <dbReference type="ChEBI" id="CHEBI:132124"/>
        <dbReference type="EC" id="1.3.5.2"/>
    </reaction>
</comment>
<comment type="cofactor">
    <cofactor evidence="1">
        <name>FMN</name>
        <dbReference type="ChEBI" id="CHEBI:58210"/>
    </cofactor>
    <text evidence="1">Binds 1 FMN per subunit.</text>
</comment>
<comment type="pathway">
    <text evidence="1">Pyrimidine metabolism; UMP biosynthesis via de novo pathway; orotate from (S)-dihydroorotate (quinone route): step 1/1.</text>
</comment>
<comment type="subunit">
    <text evidence="1">Monomer.</text>
</comment>
<comment type="subcellular location">
    <subcellularLocation>
        <location evidence="1">Cell membrane</location>
        <topology evidence="1">Peripheral membrane protein</topology>
    </subcellularLocation>
</comment>
<comment type="similarity">
    <text evidence="1">Belongs to the dihydroorotate dehydrogenase family. Type 2 subfamily.</text>
</comment>
<organism>
    <name type="scientific">Cereibacter sphaeroides (strain ATCC 17023 / DSM 158 / JCM 6121 / CCUG 31486 / LMG 2827 / NBRC 12203 / NCIMB 8253 / ATH 2.4.1.)</name>
    <name type="common">Rhodobacter sphaeroides</name>
    <dbReference type="NCBI Taxonomy" id="272943"/>
    <lineage>
        <taxon>Bacteria</taxon>
        <taxon>Pseudomonadati</taxon>
        <taxon>Pseudomonadota</taxon>
        <taxon>Alphaproteobacteria</taxon>
        <taxon>Rhodobacterales</taxon>
        <taxon>Paracoccaceae</taxon>
        <taxon>Cereibacter</taxon>
    </lineage>
</organism>